<name>SYI_PARPJ</name>
<keyword id="KW-0030">Aminoacyl-tRNA synthetase</keyword>
<keyword id="KW-0067">ATP-binding</keyword>
<keyword id="KW-0963">Cytoplasm</keyword>
<keyword id="KW-0436">Ligase</keyword>
<keyword id="KW-0479">Metal-binding</keyword>
<keyword id="KW-0547">Nucleotide-binding</keyword>
<keyword id="KW-0648">Protein biosynthesis</keyword>
<keyword id="KW-0862">Zinc</keyword>
<protein>
    <recommendedName>
        <fullName evidence="1">Isoleucine--tRNA ligase</fullName>
        <ecNumber evidence="1">6.1.1.5</ecNumber>
    </recommendedName>
    <alternativeName>
        <fullName evidence="1">Isoleucyl-tRNA synthetase</fullName>
        <shortName evidence="1">IleRS</shortName>
    </alternativeName>
</protein>
<gene>
    <name evidence="1" type="primary">ileS</name>
    <name type="ordered locus">Bphyt_3159</name>
</gene>
<dbReference type="EC" id="6.1.1.5" evidence="1"/>
<dbReference type="EMBL" id="CP001052">
    <property type="protein sequence ID" value="ACD17551.1"/>
    <property type="molecule type" value="Genomic_DNA"/>
</dbReference>
<dbReference type="RefSeq" id="WP_012434123.1">
    <property type="nucleotide sequence ID" value="NC_010681.1"/>
</dbReference>
<dbReference type="SMR" id="B2T6I7"/>
<dbReference type="STRING" id="398527.Bphyt_3159"/>
<dbReference type="KEGG" id="bpy:Bphyt_3159"/>
<dbReference type="eggNOG" id="COG0060">
    <property type="taxonomic scope" value="Bacteria"/>
</dbReference>
<dbReference type="HOGENOM" id="CLU_001493_7_1_4"/>
<dbReference type="OrthoDB" id="9810365at2"/>
<dbReference type="Proteomes" id="UP000001739">
    <property type="component" value="Chromosome 1"/>
</dbReference>
<dbReference type="GO" id="GO:0005829">
    <property type="term" value="C:cytosol"/>
    <property type="evidence" value="ECO:0007669"/>
    <property type="project" value="TreeGrafter"/>
</dbReference>
<dbReference type="GO" id="GO:0002161">
    <property type="term" value="F:aminoacyl-tRNA deacylase activity"/>
    <property type="evidence" value="ECO:0007669"/>
    <property type="project" value="InterPro"/>
</dbReference>
<dbReference type="GO" id="GO:0005524">
    <property type="term" value="F:ATP binding"/>
    <property type="evidence" value="ECO:0007669"/>
    <property type="project" value="UniProtKB-UniRule"/>
</dbReference>
<dbReference type="GO" id="GO:0004822">
    <property type="term" value="F:isoleucine-tRNA ligase activity"/>
    <property type="evidence" value="ECO:0007669"/>
    <property type="project" value="UniProtKB-UniRule"/>
</dbReference>
<dbReference type="GO" id="GO:0000049">
    <property type="term" value="F:tRNA binding"/>
    <property type="evidence" value="ECO:0007669"/>
    <property type="project" value="InterPro"/>
</dbReference>
<dbReference type="GO" id="GO:0008270">
    <property type="term" value="F:zinc ion binding"/>
    <property type="evidence" value="ECO:0007669"/>
    <property type="project" value="UniProtKB-UniRule"/>
</dbReference>
<dbReference type="GO" id="GO:0006428">
    <property type="term" value="P:isoleucyl-tRNA aminoacylation"/>
    <property type="evidence" value="ECO:0007669"/>
    <property type="project" value="UniProtKB-UniRule"/>
</dbReference>
<dbReference type="CDD" id="cd07960">
    <property type="entry name" value="Anticodon_Ia_Ile_BEm"/>
    <property type="match status" value="1"/>
</dbReference>
<dbReference type="CDD" id="cd00818">
    <property type="entry name" value="IleRS_core"/>
    <property type="match status" value="1"/>
</dbReference>
<dbReference type="FunFam" id="3.40.50.620:FF:000042">
    <property type="entry name" value="Isoleucine--tRNA ligase"/>
    <property type="match status" value="1"/>
</dbReference>
<dbReference type="FunFam" id="3.40.50.620:FF:000048">
    <property type="entry name" value="Isoleucine--tRNA ligase"/>
    <property type="match status" value="1"/>
</dbReference>
<dbReference type="Gene3D" id="1.10.730.20">
    <property type="match status" value="1"/>
</dbReference>
<dbReference type="Gene3D" id="3.40.50.620">
    <property type="entry name" value="HUPs"/>
    <property type="match status" value="2"/>
</dbReference>
<dbReference type="Gene3D" id="3.90.740.10">
    <property type="entry name" value="Valyl/Leucyl/Isoleucyl-tRNA synthetase, editing domain"/>
    <property type="match status" value="1"/>
</dbReference>
<dbReference type="HAMAP" id="MF_02002">
    <property type="entry name" value="Ile_tRNA_synth_type1"/>
    <property type="match status" value="1"/>
</dbReference>
<dbReference type="InterPro" id="IPR001412">
    <property type="entry name" value="aa-tRNA-synth_I_CS"/>
</dbReference>
<dbReference type="InterPro" id="IPR002300">
    <property type="entry name" value="aa-tRNA-synth_Ia"/>
</dbReference>
<dbReference type="InterPro" id="IPR033708">
    <property type="entry name" value="Anticodon_Ile_BEm"/>
</dbReference>
<dbReference type="InterPro" id="IPR002301">
    <property type="entry name" value="Ile-tRNA-ligase"/>
</dbReference>
<dbReference type="InterPro" id="IPR023585">
    <property type="entry name" value="Ile-tRNA-ligase_type1"/>
</dbReference>
<dbReference type="InterPro" id="IPR050081">
    <property type="entry name" value="Ile-tRNA_ligase"/>
</dbReference>
<dbReference type="InterPro" id="IPR013155">
    <property type="entry name" value="M/V/L/I-tRNA-synth_anticd-bd"/>
</dbReference>
<dbReference type="InterPro" id="IPR014729">
    <property type="entry name" value="Rossmann-like_a/b/a_fold"/>
</dbReference>
<dbReference type="InterPro" id="IPR009080">
    <property type="entry name" value="tRNAsynth_Ia_anticodon-bd"/>
</dbReference>
<dbReference type="InterPro" id="IPR009008">
    <property type="entry name" value="Val/Leu/Ile-tRNA-synth_edit"/>
</dbReference>
<dbReference type="InterPro" id="IPR010663">
    <property type="entry name" value="Znf_FPG/IleRS"/>
</dbReference>
<dbReference type="NCBIfam" id="TIGR00392">
    <property type="entry name" value="ileS"/>
    <property type="match status" value="1"/>
</dbReference>
<dbReference type="PANTHER" id="PTHR42765:SF1">
    <property type="entry name" value="ISOLEUCINE--TRNA LIGASE, MITOCHONDRIAL"/>
    <property type="match status" value="1"/>
</dbReference>
<dbReference type="PANTHER" id="PTHR42765">
    <property type="entry name" value="SOLEUCYL-TRNA SYNTHETASE"/>
    <property type="match status" value="1"/>
</dbReference>
<dbReference type="Pfam" id="PF08264">
    <property type="entry name" value="Anticodon_1"/>
    <property type="match status" value="1"/>
</dbReference>
<dbReference type="Pfam" id="PF00133">
    <property type="entry name" value="tRNA-synt_1"/>
    <property type="match status" value="1"/>
</dbReference>
<dbReference type="Pfam" id="PF06827">
    <property type="entry name" value="zf-FPG_IleRS"/>
    <property type="match status" value="1"/>
</dbReference>
<dbReference type="PRINTS" id="PR00984">
    <property type="entry name" value="TRNASYNTHILE"/>
</dbReference>
<dbReference type="SUPFAM" id="SSF47323">
    <property type="entry name" value="Anticodon-binding domain of a subclass of class I aminoacyl-tRNA synthetases"/>
    <property type="match status" value="1"/>
</dbReference>
<dbReference type="SUPFAM" id="SSF52374">
    <property type="entry name" value="Nucleotidylyl transferase"/>
    <property type="match status" value="1"/>
</dbReference>
<dbReference type="SUPFAM" id="SSF50677">
    <property type="entry name" value="ValRS/IleRS/LeuRS editing domain"/>
    <property type="match status" value="1"/>
</dbReference>
<dbReference type="PROSITE" id="PS00178">
    <property type="entry name" value="AA_TRNA_LIGASE_I"/>
    <property type="match status" value="1"/>
</dbReference>
<evidence type="ECO:0000255" key="1">
    <source>
        <dbReference type="HAMAP-Rule" id="MF_02002"/>
    </source>
</evidence>
<reference key="1">
    <citation type="journal article" date="2011" name="J. Bacteriol.">
        <title>Complete genome sequence of the plant growth-promoting endophyte Burkholderia phytofirmans strain PsJN.</title>
        <authorList>
            <person name="Weilharter A."/>
            <person name="Mitter B."/>
            <person name="Shin M.V."/>
            <person name="Chain P.S."/>
            <person name="Nowak J."/>
            <person name="Sessitsch A."/>
        </authorList>
    </citation>
    <scope>NUCLEOTIDE SEQUENCE [LARGE SCALE GENOMIC DNA]</scope>
    <source>
        <strain>DSM 17436 / LMG 22146 / PsJN</strain>
    </source>
</reference>
<accession>B2T6I7</accession>
<proteinExistence type="inferred from homology"/>
<sequence>MSNKKADSKPQSRYPVNLLDTPFPMRGDLPKREPQWVKEWQERKVYETIRAASKGRKKFILHDGPPYANGDIHLGHAVNKILKDMIVKARNLAGFDAVYVPGWDCHGMPIEIQIEKQFGKSLPAAEVMQKARAYATEQIEKQKVGFRRLGVLGDWDNPYKTMNFTNEAGEIRALAKIMEKGYVFRGLKPVNWCFDCGSALAEAEVEYKDKTDPTIDVLFSFAEPEKTAQAFGLSALPREEGGIVIWTTTPWTIPANQALNLHPEIVYALVDTPRGLLILAEERVEACLKLYGLEGTIVATAPGAKLVNVRFNHPLASAHPGYKRTAPVFLGDYVTTETGTGIVHSSPAYGVEDFVSCKAHGMADSDIINPVMGDGRYIESLALFGGLSIWAANPQIVEALQGAGSLMRTEKYTHSYMHCWRHKTPIIYRATSQWFAGMDVKPNDTDKTLRETALEGIENTAFYPAWGKQRLFSMIANRPDWTLSRQRQWGVPMAFFVHKETGELHPRTLELLEEVAQRVEKAGIEAWQTLDPRELLGDDANMYEKNRDTLDVWFDSGTTHWHVLRGSHKDELQFPADLYLEGSDQHRGWFHSSLLTASMLDGRPPYNALLTHGFTVDGEGRKMSKSLGNGIDPHEVANRLGAEIIRLWIASTDYSGELAISEEILKRVTEGYRRIRNTLRFLLANLSDFDFAQHARPVEDWLEIDRYAVALSTNLQNDILSHYDKYEFHPVVAKLQTFCSEDLGGFYLDVLKDRLYTTAADSVARRSAQTALYHIAHGLLRLMAPFLSFTAEEAWKIFQPNSETIFTETYHAFPAVPDAGALLDKWTLLRAARSDVTKALEEARVANLIGSSLQAEVEIRASGARYDALTSLGDDLKFVLITSAATVVKVDSEAEEAVEVIASKYLKCERCWHYRADVGANAEHPTLCDRCFSNLFGNGEIRSAA</sequence>
<organism>
    <name type="scientific">Paraburkholderia phytofirmans (strain DSM 17436 / LMG 22146 / PsJN)</name>
    <name type="common">Burkholderia phytofirmans</name>
    <dbReference type="NCBI Taxonomy" id="398527"/>
    <lineage>
        <taxon>Bacteria</taxon>
        <taxon>Pseudomonadati</taxon>
        <taxon>Pseudomonadota</taxon>
        <taxon>Betaproteobacteria</taxon>
        <taxon>Burkholderiales</taxon>
        <taxon>Burkholderiaceae</taxon>
        <taxon>Paraburkholderia</taxon>
    </lineage>
</organism>
<feature type="chain" id="PRO_1000189140" description="Isoleucine--tRNA ligase">
    <location>
        <begin position="1"/>
        <end position="945"/>
    </location>
</feature>
<feature type="short sequence motif" description="'HIGH' region">
    <location>
        <begin position="66"/>
        <end position="76"/>
    </location>
</feature>
<feature type="short sequence motif" description="'KMSKS' region">
    <location>
        <begin position="622"/>
        <end position="626"/>
    </location>
</feature>
<feature type="binding site" evidence="1">
    <location>
        <position position="581"/>
    </location>
    <ligand>
        <name>L-isoleucyl-5'-AMP</name>
        <dbReference type="ChEBI" id="CHEBI:178002"/>
    </ligand>
</feature>
<feature type="binding site" evidence="1">
    <location>
        <position position="625"/>
    </location>
    <ligand>
        <name>ATP</name>
        <dbReference type="ChEBI" id="CHEBI:30616"/>
    </ligand>
</feature>
<feature type="binding site" evidence="1">
    <location>
        <position position="908"/>
    </location>
    <ligand>
        <name>Zn(2+)</name>
        <dbReference type="ChEBI" id="CHEBI:29105"/>
    </ligand>
</feature>
<feature type="binding site" evidence="1">
    <location>
        <position position="911"/>
    </location>
    <ligand>
        <name>Zn(2+)</name>
        <dbReference type="ChEBI" id="CHEBI:29105"/>
    </ligand>
</feature>
<feature type="binding site" evidence="1">
    <location>
        <position position="928"/>
    </location>
    <ligand>
        <name>Zn(2+)</name>
        <dbReference type="ChEBI" id="CHEBI:29105"/>
    </ligand>
</feature>
<feature type="binding site" evidence="1">
    <location>
        <position position="931"/>
    </location>
    <ligand>
        <name>Zn(2+)</name>
        <dbReference type="ChEBI" id="CHEBI:29105"/>
    </ligand>
</feature>
<comment type="function">
    <text evidence="1">Catalyzes the attachment of isoleucine to tRNA(Ile). As IleRS can inadvertently accommodate and process structurally similar amino acids such as valine, to avoid such errors it has two additional distinct tRNA(Ile)-dependent editing activities. One activity is designated as 'pretransfer' editing and involves the hydrolysis of activated Val-AMP. The other activity is designated 'posttransfer' editing and involves deacylation of mischarged Val-tRNA(Ile).</text>
</comment>
<comment type="catalytic activity">
    <reaction evidence="1">
        <text>tRNA(Ile) + L-isoleucine + ATP = L-isoleucyl-tRNA(Ile) + AMP + diphosphate</text>
        <dbReference type="Rhea" id="RHEA:11060"/>
        <dbReference type="Rhea" id="RHEA-COMP:9666"/>
        <dbReference type="Rhea" id="RHEA-COMP:9695"/>
        <dbReference type="ChEBI" id="CHEBI:30616"/>
        <dbReference type="ChEBI" id="CHEBI:33019"/>
        <dbReference type="ChEBI" id="CHEBI:58045"/>
        <dbReference type="ChEBI" id="CHEBI:78442"/>
        <dbReference type="ChEBI" id="CHEBI:78528"/>
        <dbReference type="ChEBI" id="CHEBI:456215"/>
        <dbReference type="EC" id="6.1.1.5"/>
    </reaction>
</comment>
<comment type="cofactor">
    <cofactor evidence="1">
        <name>Zn(2+)</name>
        <dbReference type="ChEBI" id="CHEBI:29105"/>
    </cofactor>
    <text evidence="1">Binds 1 zinc ion per subunit.</text>
</comment>
<comment type="subunit">
    <text evidence="1">Monomer.</text>
</comment>
<comment type="subcellular location">
    <subcellularLocation>
        <location evidence="1">Cytoplasm</location>
    </subcellularLocation>
</comment>
<comment type="domain">
    <text evidence="1">IleRS has two distinct active sites: one for aminoacylation and one for editing. The misactivated valine is translocated from the active site to the editing site, which sterically excludes the correctly activated isoleucine. The single editing site contains two valyl binding pockets, one specific for each substrate (Val-AMP or Val-tRNA(Ile)).</text>
</comment>
<comment type="similarity">
    <text evidence="1">Belongs to the class-I aminoacyl-tRNA synthetase family. IleS type 1 subfamily.</text>
</comment>